<sequence length="196" mass="21508">MNEAVSPGALSTLFTDARTHNGWRETPVSDETLQELYALMKWGPTSANCSPARIVFIRTAEGKERLRPALSSGNLQKTLTAPVTAIVAWDSEFYERLPLLFPHGDARSWFTSSPQLAEETAFRNSSMQAAYLIVACRALGLDTGPMSGFDRQHVDDAFFAGSTLKSNLLINIGYGDSSKLFARLPRLSFEEACGLL</sequence>
<dbReference type="EC" id="1.1.1.298" evidence="1"/>
<dbReference type="EMBL" id="AE005674">
    <property type="protein sequence ID" value="AAN42637.1"/>
    <property type="molecule type" value="Genomic_DNA"/>
</dbReference>
<dbReference type="EMBL" id="AE014073">
    <property type="protein sequence ID" value="AAP16522.1"/>
    <property type="molecule type" value="Genomic_DNA"/>
</dbReference>
<dbReference type="RefSeq" id="NP_706930.1">
    <property type="nucleotide sequence ID" value="NC_004337.2"/>
</dbReference>
<dbReference type="RefSeq" id="WP_001001165.1">
    <property type="nucleotide sequence ID" value="NZ_WPGW01000134.1"/>
</dbReference>
<dbReference type="SMR" id="Q83RV4"/>
<dbReference type="STRING" id="198214.SF1011"/>
<dbReference type="PaxDb" id="198214-SF1011"/>
<dbReference type="GeneID" id="1023955"/>
<dbReference type="KEGG" id="sfl:SF1011"/>
<dbReference type="KEGG" id="sfx:S1081"/>
<dbReference type="PATRIC" id="fig|198214.7.peg.1175"/>
<dbReference type="HOGENOM" id="CLU_084441_0_0_6"/>
<dbReference type="Proteomes" id="UP000001006">
    <property type="component" value="Chromosome"/>
</dbReference>
<dbReference type="Proteomes" id="UP000002673">
    <property type="component" value="Chromosome"/>
</dbReference>
<dbReference type="GO" id="GO:0035527">
    <property type="term" value="F:3-hydroxypropionate dehydrogenase (NADP+) activity"/>
    <property type="evidence" value="ECO:0007669"/>
    <property type="project" value="UniProtKB-UniRule"/>
</dbReference>
<dbReference type="GO" id="GO:0019740">
    <property type="term" value="P:nitrogen utilization"/>
    <property type="evidence" value="ECO:0007669"/>
    <property type="project" value="UniProtKB-UniRule"/>
</dbReference>
<dbReference type="GO" id="GO:0006212">
    <property type="term" value="P:uracil catabolic process"/>
    <property type="evidence" value="ECO:0007669"/>
    <property type="project" value="UniProtKB-UniRule"/>
</dbReference>
<dbReference type="CDD" id="cd02148">
    <property type="entry name" value="RutE-like"/>
    <property type="match status" value="1"/>
</dbReference>
<dbReference type="FunFam" id="3.40.109.10:FF:000003">
    <property type="entry name" value="Probable malonic semialdehyde reductase RutE"/>
    <property type="match status" value="1"/>
</dbReference>
<dbReference type="Gene3D" id="3.40.109.10">
    <property type="entry name" value="NADH Oxidase"/>
    <property type="match status" value="1"/>
</dbReference>
<dbReference type="HAMAP" id="MF_01204">
    <property type="entry name" value="Oxidoreductase_RutE_HadB"/>
    <property type="match status" value="1"/>
</dbReference>
<dbReference type="InterPro" id="IPR029479">
    <property type="entry name" value="Nitroreductase"/>
</dbReference>
<dbReference type="InterPro" id="IPR000415">
    <property type="entry name" value="Nitroreductase-like"/>
</dbReference>
<dbReference type="InterPro" id="IPR050461">
    <property type="entry name" value="Nitroreductase_HadB/RutE"/>
</dbReference>
<dbReference type="InterPro" id="IPR023936">
    <property type="entry name" value="RutE-like"/>
</dbReference>
<dbReference type="NCBIfam" id="NF003768">
    <property type="entry name" value="PRK05365.1"/>
    <property type="match status" value="1"/>
</dbReference>
<dbReference type="PANTHER" id="PTHR43543">
    <property type="entry name" value="MALONIC SEMIALDEHYDE REDUCTASE RUTE-RELATED"/>
    <property type="match status" value="1"/>
</dbReference>
<dbReference type="PANTHER" id="PTHR43543:SF1">
    <property type="entry name" value="MALONIC SEMIALDEHYDE REDUCTASE RUTE-RELATED"/>
    <property type="match status" value="1"/>
</dbReference>
<dbReference type="Pfam" id="PF00881">
    <property type="entry name" value="Nitroreductase"/>
    <property type="match status" value="1"/>
</dbReference>
<dbReference type="SUPFAM" id="SSF55469">
    <property type="entry name" value="FMN-dependent nitroreductase-like"/>
    <property type="match status" value="1"/>
</dbReference>
<comment type="function">
    <text evidence="1">May reduce toxic product malonic semialdehyde to 3-hydroxypropionic acid, which is excreted.</text>
</comment>
<comment type="catalytic activity">
    <reaction evidence="1">
        <text>3-hydroxypropanoate + NADP(+) = 3-oxopropanoate + NADPH + H(+)</text>
        <dbReference type="Rhea" id="RHEA:26438"/>
        <dbReference type="ChEBI" id="CHEBI:15378"/>
        <dbReference type="ChEBI" id="CHEBI:16510"/>
        <dbReference type="ChEBI" id="CHEBI:33190"/>
        <dbReference type="ChEBI" id="CHEBI:57783"/>
        <dbReference type="ChEBI" id="CHEBI:58349"/>
        <dbReference type="EC" id="1.1.1.298"/>
    </reaction>
</comment>
<comment type="cofactor">
    <cofactor evidence="1">
        <name>FMN</name>
        <dbReference type="ChEBI" id="CHEBI:58210"/>
    </cofactor>
</comment>
<comment type="induction">
    <text evidence="1">Up-regulated by the nitrogen regulatory protein C (NtrC also called GlnG) and repressed by RutR.</text>
</comment>
<comment type="similarity">
    <text evidence="1">Belongs to the nitroreductase family. HadB/RutE subfamily.</text>
</comment>
<keyword id="KW-0285">Flavoprotein</keyword>
<keyword id="KW-0288">FMN</keyword>
<keyword id="KW-0520">NAD</keyword>
<keyword id="KW-0521">NADP</keyword>
<keyword id="KW-0560">Oxidoreductase</keyword>
<keyword id="KW-1185">Reference proteome</keyword>
<evidence type="ECO:0000255" key="1">
    <source>
        <dbReference type="HAMAP-Rule" id="MF_01204"/>
    </source>
</evidence>
<accession>Q83RV4</accession>
<accession>Q7C251</accession>
<organism>
    <name type="scientific">Shigella flexneri</name>
    <dbReference type="NCBI Taxonomy" id="623"/>
    <lineage>
        <taxon>Bacteria</taxon>
        <taxon>Pseudomonadati</taxon>
        <taxon>Pseudomonadota</taxon>
        <taxon>Gammaproteobacteria</taxon>
        <taxon>Enterobacterales</taxon>
        <taxon>Enterobacteriaceae</taxon>
        <taxon>Shigella</taxon>
    </lineage>
</organism>
<reference key="1">
    <citation type="journal article" date="2002" name="Nucleic Acids Res.">
        <title>Genome sequence of Shigella flexneri 2a: insights into pathogenicity through comparison with genomes of Escherichia coli K12 and O157.</title>
        <authorList>
            <person name="Jin Q."/>
            <person name="Yuan Z."/>
            <person name="Xu J."/>
            <person name="Wang Y."/>
            <person name="Shen Y."/>
            <person name="Lu W."/>
            <person name="Wang J."/>
            <person name="Liu H."/>
            <person name="Yang J."/>
            <person name="Yang F."/>
            <person name="Zhang X."/>
            <person name="Zhang J."/>
            <person name="Yang G."/>
            <person name="Wu H."/>
            <person name="Qu D."/>
            <person name="Dong J."/>
            <person name="Sun L."/>
            <person name="Xue Y."/>
            <person name="Zhao A."/>
            <person name="Gao Y."/>
            <person name="Zhu J."/>
            <person name="Kan B."/>
            <person name="Ding K."/>
            <person name="Chen S."/>
            <person name="Cheng H."/>
            <person name="Yao Z."/>
            <person name="He B."/>
            <person name="Chen R."/>
            <person name="Ma D."/>
            <person name="Qiang B."/>
            <person name="Wen Y."/>
            <person name="Hou Y."/>
            <person name="Yu J."/>
        </authorList>
    </citation>
    <scope>NUCLEOTIDE SEQUENCE [LARGE SCALE GENOMIC DNA]</scope>
    <source>
        <strain>301 / Serotype 2a</strain>
    </source>
</reference>
<reference key="2">
    <citation type="journal article" date="2003" name="Infect. Immun.">
        <title>Complete genome sequence and comparative genomics of Shigella flexneri serotype 2a strain 2457T.</title>
        <authorList>
            <person name="Wei J."/>
            <person name="Goldberg M.B."/>
            <person name="Burland V."/>
            <person name="Venkatesan M.M."/>
            <person name="Deng W."/>
            <person name="Fournier G."/>
            <person name="Mayhew G.F."/>
            <person name="Plunkett G. III"/>
            <person name="Rose D.J."/>
            <person name="Darling A."/>
            <person name="Mau B."/>
            <person name="Perna N.T."/>
            <person name="Payne S.M."/>
            <person name="Runyen-Janecky L.J."/>
            <person name="Zhou S."/>
            <person name="Schwartz D.C."/>
            <person name="Blattner F.R."/>
        </authorList>
    </citation>
    <scope>NUCLEOTIDE SEQUENCE [LARGE SCALE GENOMIC DNA]</scope>
    <source>
        <strain>ATCC 700930 / 2457T / Serotype 2a</strain>
    </source>
</reference>
<protein>
    <recommendedName>
        <fullName evidence="1">Probable malonic semialdehyde reductase RutE</fullName>
        <ecNumber evidence="1">1.1.1.298</ecNumber>
    </recommendedName>
</protein>
<gene>
    <name evidence="1" type="primary">rutE</name>
    <name type="ordered locus">SF1011</name>
    <name type="ordered locus">S1081</name>
</gene>
<proteinExistence type="inferred from homology"/>
<name>RUTE_SHIFL</name>
<feature type="chain" id="PRO_1000066147" description="Probable malonic semialdehyde reductase RutE">
    <location>
        <begin position="1"/>
        <end position="196"/>
    </location>
</feature>